<accession>P9WN44</accession>
<accession>L0T925</accession>
<accession>Q10625</accession>
<name>GLGB_MYCTO</name>
<comment type="function">
    <text evidence="1">Essential enzyme that catalyzes the formation of the alpha-1,6-glucosidic linkages in glucan chains by scission of a 1,4-alpha-linked oligosaccharide from growing alpha-1,4-glucan chains and the subsequent attachment of the oligosaccharide to the alpha-1,6 position. Is involved in the biosynthesis of both glycogen and capsular alpha-D-glucan (By similarity).</text>
</comment>
<comment type="catalytic activity">
    <reaction>
        <text>Transfers a segment of a (1-&gt;4)-alpha-D-glucan chain to a primary hydroxy group in a similar glucan chain.</text>
        <dbReference type="EC" id="2.4.1.18"/>
    </reaction>
</comment>
<comment type="pathway">
    <text>Glycan biosynthesis; glycogen biosynthesis.</text>
</comment>
<comment type="pathway">
    <text>Capsule biogenesis; capsule polysaccharide biosynthesis.</text>
</comment>
<comment type="subunit">
    <text evidence="1">Monomer.</text>
</comment>
<comment type="similarity">
    <text evidence="2">Belongs to the glycosyl hydrolase 13 family. GlgB subfamily.</text>
</comment>
<protein>
    <recommendedName>
        <fullName>1,4-alpha-glucan branching enzyme GlgB</fullName>
        <ecNumber>2.4.1.18</ecNumber>
    </recommendedName>
    <alternativeName>
        <fullName>1,4-alpha-D-glucan:1,4-alpha-D-glucan 6-glucosyl-transferase</fullName>
    </alternativeName>
    <alternativeName>
        <fullName>Alpha-(1-&gt;4)-glucan branching enzyme</fullName>
    </alternativeName>
    <alternativeName>
        <fullName>Glycogen-branching enzyme</fullName>
        <shortName>BE</shortName>
    </alternativeName>
</protein>
<sequence length="731" mass="81734">MSRSEKLTGEHLAPEPAEMARLVAGTHHNPHGILGAHEYDDHTVIRAFRPHAVEVVALVGKDRFSLQHLDSGLFAVALPFVDLIDYRLQVTYEGCEPHTVADAYRFLPTLGEVDLHLFAEGRHERLWEVLGAHPRSFTTADGVVSGVSFAVWAPNAKGVSLIGEFNGWNGHEAPMRVLGPSGVWELFWPDFPCDGLYKFRVHGADGVVTDRADAFAFGTEVPQQTASRVTSSDYTWGDDDWMAGRALRNPVNEAMSTYEVHLGSWRPGLSYRQLARELTDYIVDQGFTHVELLPVAEHPFAGSWGYQVTSYYAPTSRFGTPDDFRALVDALHQAGIGVIVDWVPAHFPKDAWALGRFDGTPLYEHSDPKRGEQLDWGTYVFDFGRPEVRNFLVANALYWLQEFHIDGLRVDAVASMLYLDYSRPEGGWTPNVHGGRENLEAVQFLQEMNATAHKVAPGIVTIAEESTPWSGVTRPTNIGGLGFSMKWNMGWMHDTLDYVSRDPVYRSYHHHEMTFSMLYAFSENYVLPLSHDEVVHGKGTLWGRMPGNNHVKAAGLRSLLAYQWAHPGKQLLFMGQEFGQRAEWSEQRGLDWFQLDENGFSNGIQRLVRDINDIYRCHPALWSLDTTPEGYSWIDANDSANNVLSFMRYGSDGSVLACVFNFAGAEHRDYRLGLPRAGRWREVLNTDATIYHGSGIGNLGGVDATDDPWHGRPASAVLVLPPTSALWLTPA</sequence>
<evidence type="ECO:0000250" key="1"/>
<evidence type="ECO:0000305" key="2"/>
<proteinExistence type="inferred from homology"/>
<reference key="1">
    <citation type="journal article" date="2002" name="J. Bacteriol.">
        <title>Whole-genome comparison of Mycobacterium tuberculosis clinical and laboratory strains.</title>
        <authorList>
            <person name="Fleischmann R.D."/>
            <person name="Alland D."/>
            <person name="Eisen J.A."/>
            <person name="Carpenter L."/>
            <person name="White O."/>
            <person name="Peterson J.D."/>
            <person name="DeBoy R.T."/>
            <person name="Dodson R.J."/>
            <person name="Gwinn M.L."/>
            <person name="Haft D.H."/>
            <person name="Hickey E.K."/>
            <person name="Kolonay J.F."/>
            <person name="Nelson W.C."/>
            <person name="Umayam L.A."/>
            <person name="Ermolaeva M.D."/>
            <person name="Salzberg S.L."/>
            <person name="Delcher A."/>
            <person name="Utterback T.R."/>
            <person name="Weidman J.F."/>
            <person name="Khouri H.M."/>
            <person name="Gill J."/>
            <person name="Mikula A."/>
            <person name="Bishai W."/>
            <person name="Jacobs W.R. Jr."/>
            <person name="Venter J.C."/>
            <person name="Fraser C.M."/>
        </authorList>
    </citation>
    <scope>NUCLEOTIDE SEQUENCE [LARGE SCALE GENOMIC DNA]</scope>
    <source>
        <strain>CDC 1551 / Oshkosh</strain>
    </source>
</reference>
<dbReference type="EC" id="2.4.1.18"/>
<dbReference type="EMBL" id="AE000516">
    <property type="protein sequence ID" value="AAK45632.1"/>
    <property type="molecule type" value="Genomic_DNA"/>
</dbReference>
<dbReference type="PIR" id="B70770">
    <property type="entry name" value="B70770"/>
</dbReference>
<dbReference type="RefSeq" id="WP_010924383.1">
    <property type="nucleotide sequence ID" value="NC_002755.2"/>
</dbReference>
<dbReference type="SMR" id="P9WN44"/>
<dbReference type="CAZy" id="CBM48">
    <property type="family name" value="Carbohydrate-Binding Module Family 48"/>
</dbReference>
<dbReference type="CAZy" id="GH13">
    <property type="family name" value="Glycoside Hydrolase Family 13"/>
</dbReference>
<dbReference type="KEGG" id="mtc:MT1368"/>
<dbReference type="HOGENOM" id="CLU_004245_3_2_11"/>
<dbReference type="UniPathway" id="UPA00164"/>
<dbReference type="UniPathway" id="UPA00934"/>
<dbReference type="Proteomes" id="UP000001020">
    <property type="component" value="Chromosome"/>
</dbReference>
<dbReference type="GO" id="GO:0005829">
    <property type="term" value="C:cytosol"/>
    <property type="evidence" value="ECO:0007669"/>
    <property type="project" value="TreeGrafter"/>
</dbReference>
<dbReference type="GO" id="GO:0003844">
    <property type="term" value="F:1,4-alpha-glucan branching enzyme activity"/>
    <property type="evidence" value="ECO:0007669"/>
    <property type="project" value="UniProtKB-UniRule"/>
</dbReference>
<dbReference type="GO" id="GO:0043169">
    <property type="term" value="F:cation binding"/>
    <property type="evidence" value="ECO:0007669"/>
    <property type="project" value="InterPro"/>
</dbReference>
<dbReference type="GO" id="GO:0004553">
    <property type="term" value="F:hydrolase activity, hydrolyzing O-glycosyl compounds"/>
    <property type="evidence" value="ECO:0007669"/>
    <property type="project" value="InterPro"/>
</dbReference>
<dbReference type="GO" id="GO:0045227">
    <property type="term" value="P:capsule polysaccharide biosynthetic process"/>
    <property type="evidence" value="ECO:0007669"/>
    <property type="project" value="UniProtKB-UniPathway"/>
</dbReference>
<dbReference type="GO" id="GO:0005978">
    <property type="term" value="P:glycogen biosynthetic process"/>
    <property type="evidence" value="ECO:0007669"/>
    <property type="project" value="UniProtKB-UniRule"/>
</dbReference>
<dbReference type="CDD" id="cd11322">
    <property type="entry name" value="AmyAc_Glg_BE"/>
    <property type="match status" value="1"/>
</dbReference>
<dbReference type="CDD" id="cd02855">
    <property type="entry name" value="E_set_GBE_prok_N"/>
    <property type="match status" value="1"/>
</dbReference>
<dbReference type="FunFam" id="2.60.40.10:FF:000169">
    <property type="entry name" value="1,4-alpha-glucan branching enzyme GlgB"/>
    <property type="match status" value="1"/>
</dbReference>
<dbReference type="FunFam" id="2.60.40.10:FF:002204">
    <property type="entry name" value="1,4-alpha-glucan branching enzyme GlgB"/>
    <property type="match status" value="1"/>
</dbReference>
<dbReference type="FunFam" id="2.60.40.1180:FF:000002">
    <property type="entry name" value="1,4-alpha-glucan branching enzyme GlgB"/>
    <property type="match status" value="1"/>
</dbReference>
<dbReference type="FunFam" id="3.20.20.80:FF:000003">
    <property type="entry name" value="1,4-alpha-glucan branching enzyme GlgB"/>
    <property type="match status" value="1"/>
</dbReference>
<dbReference type="Gene3D" id="3.20.20.80">
    <property type="entry name" value="Glycosidases"/>
    <property type="match status" value="1"/>
</dbReference>
<dbReference type="Gene3D" id="2.60.40.1180">
    <property type="entry name" value="Golgi alpha-mannosidase II"/>
    <property type="match status" value="1"/>
</dbReference>
<dbReference type="Gene3D" id="2.60.40.10">
    <property type="entry name" value="Immunoglobulins"/>
    <property type="match status" value="2"/>
</dbReference>
<dbReference type="HAMAP" id="MF_00685">
    <property type="entry name" value="GlgB"/>
    <property type="match status" value="1"/>
</dbReference>
<dbReference type="InterPro" id="IPR006048">
    <property type="entry name" value="A-amylase/branching_C"/>
</dbReference>
<dbReference type="InterPro" id="IPR037439">
    <property type="entry name" value="Branching_enzy"/>
</dbReference>
<dbReference type="InterPro" id="IPR006407">
    <property type="entry name" value="GlgB"/>
</dbReference>
<dbReference type="InterPro" id="IPR054169">
    <property type="entry name" value="GlgB_N"/>
</dbReference>
<dbReference type="InterPro" id="IPR044143">
    <property type="entry name" value="GlgB_N_E_set_prok"/>
</dbReference>
<dbReference type="InterPro" id="IPR006047">
    <property type="entry name" value="Glyco_hydro_13_cat_dom"/>
</dbReference>
<dbReference type="InterPro" id="IPR004193">
    <property type="entry name" value="Glyco_hydro_13_N"/>
</dbReference>
<dbReference type="InterPro" id="IPR013780">
    <property type="entry name" value="Glyco_hydro_b"/>
</dbReference>
<dbReference type="InterPro" id="IPR017853">
    <property type="entry name" value="Glycoside_hydrolase_SF"/>
</dbReference>
<dbReference type="InterPro" id="IPR013783">
    <property type="entry name" value="Ig-like_fold"/>
</dbReference>
<dbReference type="InterPro" id="IPR014756">
    <property type="entry name" value="Ig_E-set"/>
</dbReference>
<dbReference type="NCBIfam" id="TIGR01515">
    <property type="entry name" value="branching_enzym"/>
    <property type="match status" value="1"/>
</dbReference>
<dbReference type="NCBIfam" id="NF003811">
    <property type="entry name" value="PRK05402.1"/>
    <property type="match status" value="1"/>
</dbReference>
<dbReference type="NCBIfam" id="NF008967">
    <property type="entry name" value="PRK12313.1"/>
    <property type="match status" value="1"/>
</dbReference>
<dbReference type="PANTHER" id="PTHR43651">
    <property type="entry name" value="1,4-ALPHA-GLUCAN-BRANCHING ENZYME"/>
    <property type="match status" value="1"/>
</dbReference>
<dbReference type="PANTHER" id="PTHR43651:SF3">
    <property type="entry name" value="1,4-ALPHA-GLUCAN-BRANCHING ENZYME"/>
    <property type="match status" value="1"/>
</dbReference>
<dbReference type="Pfam" id="PF00128">
    <property type="entry name" value="Alpha-amylase"/>
    <property type="match status" value="2"/>
</dbReference>
<dbReference type="Pfam" id="PF02806">
    <property type="entry name" value="Alpha-amylase_C"/>
    <property type="match status" value="1"/>
</dbReference>
<dbReference type="Pfam" id="PF02922">
    <property type="entry name" value="CBM_48"/>
    <property type="match status" value="1"/>
</dbReference>
<dbReference type="Pfam" id="PF22019">
    <property type="entry name" value="GlgB_N"/>
    <property type="match status" value="1"/>
</dbReference>
<dbReference type="PIRSF" id="PIRSF000463">
    <property type="entry name" value="GlgB"/>
    <property type="match status" value="1"/>
</dbReference>
<dbReference type="SMART" id="SM00642">
    <property type="entry name" value="Aamy"/>
    <property type="match status" value="1"/>
</dbReference>
<dbReference type="SUPFAM" id="SSF51445">
    <property type="entry name" value="(Trans)glycosidases"/>
    <property type="match status" value="1"/>
</dbReference>
<dbReference type="SUPFAM" id="SSF81296">
    <property type="entry name" value="E set domains"/>
    <property type="match status" value="2"/>
</dbReference>
<dbReference type="SUPFAM" id="SSF51011">
    <property type="entry name" value="Glycosyl hydrolase domain"/>
    <property type="match status" value="1"/>
</dbReference>
<feature type="chain" id="PRO_0000427191" description="1,4-alpha-glucan branching enzyme GlgB">
    <location>
        <begin position="1"/>
        <end position="731"/>
    </location>
</feature>
<feature type="active site" description="Nucleophile" evidence="1">
    <location>
        <position position="411"/>
    </location>
</feature>
<feature type="active site" description="Proton donor" evidence="1">
    <location>
        <position position="464"/>
    </location>
</feature>
<feature type="disulfide bond" evidence="1">
    <location>
        <begin position="193"/>
        <end position="617"/>
    </location>
</feature>
<gene>
    <name type="primary">glgB</name>
    <name type="ordered locus">MT1368</name>
</gene>
<keyword id="KW-0972">Capsule biogenesis/degradation</keyword>
<keyword id="KW-0119">Carbohydrate metabolism</keyword>
<keyword id="KW-1015">Disulfide bond</keyword>
<keyword id="KW-0320">Glycogen biosynthesis</keyword>
<keyword id="KW-0321">Glycogen metabolism</keyword>
<keyword id="KW-0328">Glycosyltransferase</keyword>
<keyword id="KW-1185">Reference proteome</keyword>
<keyword id="KW-0808">Transferase</keyword>
<organism>
    <name type="scientific">Mycobacterium tuberculosis (strain CDC 1551 / Oshkosh)</name>
    <dbReference type="NCBI Taxonomy" id="83331"/>
    <lineage>
        <taxon>Bacteria</taxon>
        <taxon>Bacillati</taxon>
        <taxon>Actinomycetota</taxon>
        <taxon>Actinomycetes</taxon>
        <taxon>Mycobacteriales</taxon>
        <taxon>Mycobacteriaceae</taxon>
        <taxon>Mycobacterium</taxon>
        <taxon>Mycobacterium tuberculosis complex</taxon>
    </lineage>
</organism>